<protein>
    <recommendedName>
        <fullName evidence="1">NAD(P)H-quinone oxidoreductase subunit I, chloroplastic</fullName>
        <ecNumber evidence="1">7.1.1.-</ecNumber>
    </recommendedName>
    <alternativeName>
        <fullName evidence="1">NAD(P)H dehydrogenase subunit I</fullName>
        <shortName evidence="1">NDH subunit I</shortName>
    </alternativeName>
    <alternativeName>
        <fullName evidence="1">NADH-plastoquinone oxidoreductase subunit I</fullName>
    </alternativeName>
</protein>
<organism>
    <name type="scientific">Flaveria ramosissima</name>
    <name type="common">Yellowtops</name>
    <dbReference type="NCBI Taxonomy" id="41578"/>
    <lineage>
        <taxon>Eukaryota</taxon>
        <taxon>Viridiplantae</taxon>
        <taxon>Streptophyta</taxon>
        <taxon>Embryophyta</taxon>
        <taxon>Tracheophyta</taxon>
        <taxon>Spermatophyta</taxon>
        <taxon>Magnoliopsida</taxon>
        <taxon>eudicotyledons</taxon>
        <taxon>Gunneridae</taxon>
        <taxon>Pentapetalae</taxon>
        <taxon>asterids</taxon>
        <taxon>campanulids</taxon>
        <taxon>Asterales</taxon>
        <taxon>Asteraceae</taxon>
        <taxon>Asteroideae</taxon>
        <taxon>Heliantheae alliance</taxon>
        <taxon>Tageteae</taxon>
        <taxon>Flaveria</taxon>
    </lineage>
</organism>
<sequence length="166" mass="19475">MFPMVTEFMNYGQQTVRAARYIGQGFMITLSHANRLPVTIQYPYEKLITSERFRGRIHFEFDKCIACEVCVRVCPIDLPVVDWKLETDIRKKRLLNYSIDFGICIFCGNCVEYCPTNCLSMTEEYELSTYDRHELNYNQIALGRLPMSIIDDYTIRTILNLPEIKT</sequence>
<geneLocation type="chloroplast"/>
<evidence type="ECO:0000255" key="1">
    <source>
        <dbReference type="HAMAP-Rule" id="MF_01351"/>
    </source>
</evidence>
<comment type="function">
    <text evidence="1">NDH shuttles electrons from NAD(P)H:plastoquinone, via FMN and iron-sulfur (Fe-S) centers, to quinones in the photosynthetic chain and possibly in a chloroplast respiratory chain. The immediate electron acceptor for the enzyme in this species is believed to be plastoquinone. Couples the redox reaction to proton translocation, and thus conserves the redox energy in a proton gradient.</text>
</comment>
<comment type="catalytic activity">
    <reaction evidence="1">
        <text>a plastoquinone + NADH + (n+1) H(+)(in) = a plastoquinol + NAD(+) + n H(+)(out)</text>
        <dbReference type="Rhea" id="RHEA:42608"/>
        <dbReference type="Rhea" id="RHEA-COMP:9561"/>
        <dbReference type="Rhea" id="RHEA-COMP:9562"/>
        <dbReference type="ChEBI" id="CHEBI:15378"/>
        <dbReference type="ChEBI" id="CHEBI:17757"/>
        <dbReference type="ChEBI" id="CHEBI:57540"/>
        <dbReference type="ChEBI" id="CHEBI:57945"/>
        <dbReference type="ChEBI" id="CHEBI:62192"/>
    </reaction>
</comment>
<comment type="catalytic activity">
    <reaction evidence="1">
        <text>a plastoquinone + NADPH + (n+1) H(+)(in) = a plastoquinol + NADP(+) + n H(+)(out)</text>
        <dbReference type="Rhea" id="RHEA:42612"/>
        <dbReference type="Rhea" id="RHEA-COMP:9561"/>
        <dbReference type="Rhea" id="RHEA-COMP:9562"/>
        <dbReference type="ChEBI" id="CHEBI:15378"/>
        <dbReference type="ChEBI" id="CHEBI:17757"/>
        <dbReference type="ChEBI" id="CHEBI:57783"/>
        <dbReference type="ChEBI" id="CHEBI:58349"/>
        <dbReference type="ChEBI" id="CHEBI:62192"/>
    </reaction>
</comment>
<comment type="cofactor">
    <cofactor evidence="1">
        <name>[4Fe-4S] cluster</name>
        <dbReference type="ChEBI" id="CHEBI:49883"/>
    </cofactor>
    <text evidence="1">Binds 2 [4Fe-4S] clusters per subunit.</text>
</comment>
<comment type="subunit">
    <text evidence="1">NDH is composed of at least 16 different subunits, 5 of which are encoded in the nucleus.</text>
</comment>
<comment type="subcellular location">
    <subcellularLocation>
        <location evidence="1">Plastid</location>
        <location evidence="1">Chloroplast thylakoid membrane</location>
        <topology evidence="1">Peripheral membrane protein</topology>
    </subcellularLocation>
</comment>
<comment type="similarity">
    <text evidence="1">Belongs to the complex I 23 kDa subunit family.</text>
</comment>
<proteinExistence type="inferred from homology"/>
<name>NDHI_FLARA</name>
<feature type="chain" id="PRO_0000250789" description="NAD(P)H-quinone oxidoreductase subunit I, chloroplastic">
    <location>
        <begin position="1"/>
        <end position="166"/>
    </location>
</feature>
<feature type="domain" description="4Fe-4S ferredoxin-type 1" evidence="1">
    <location>
        <begin position="55"/>
        <end position="84"/>
    </location>
</feature>
<feature type="domain" description="4Fe-4S ferredoxin-type 2" evidence="1">
    <location>
        <begin position="95"/>
        <end position="124"/>
    </location>
</feature>
<feature type="binding site" evidence="1">
    <location>
        <position position="64"/>
    </location>
    <ligand>
        <name>[4Fe-4S] cluster</name>
        <dbReference type="ChEBI" id="CHEBI:49883"/>
        <label>1</label>
    </ligand>
</feature>
<feature type="binding site" evidence="1">
    <location>
        <position position="67"/>
    </location>
    <ligand>
        <name>[4Fe-4S] cluster</name>
        <dbReference type="ChEBI" id="CHEBI:49883"/>
        <label>1</label>
    </ligand>
</feature>
<feature type="binding site" evidence="1">
    <location>
        <position position="70"/>
    </location>
    <ligand>
        <name>[4Fe-4S] cluster</name>
        <dbReference type="ChEBI" id="CHEBI:49883"/>
        <label>1</label>
    </ligand>
</feature>
<feature type="binding site" evidence="1">
    <location>
        <position position="74"/>
    </location>
    <ligand>
        <name>[4Fe-4S] cluster</name>
        <dbReference type="ChEBI" id="CHEBI:49883"/>
        <label>2</label>
    </ligand>
</feature>
<feature type="binding site" evidence="1">
    <location>
        <position position="104"/>
    </location>
    <ligand>
        <name>[4Fe-4S] cluster</name>
        <dbReference type="ChEBI" id="CHEBI:49883"/>
        <label>2</label>
    </ligand>
</feature>
<feature type="binding site" evidence="1">
    <location>
        <position position="107"/>
    </location>
    <ligand>
        <name>[4Fe-4S] cluster</name>
        <dbReference type="ChEBI" id="CHEBI:49883"/>
        <label>2</label>
    </ligand>
</feature>
<feature type="binding site" evidence="1">
    <location>
        <position position="110"/>
    </location>
    <ligand>
        <name>[4Fe-4S] cluster</name>
        <dbReference type="ChEBI" id="CHEBI:49883"/>
        <label>2</label>
    </ligand>
</feature>
<feature type="binding site" evidence="1">
    <location>
        <position position="114"/>
    </location>
    <ligand>
        <name>[4Fe-4S] cluster</name>
        <dbReference type="ChEBI" id="CHEBI:49883"/>
        <label>1</label>
    </ligand>
</feature>
<keyword id="KW-0004">4Fe-4S</keyword>
<keyword id="KW-0150">Chloroplast</keyword>
<keyword id="KW-0408">Iron</keyword>
<keyword id="KW-0411">Iron-sulfur</keyword>
<keyword id="KW-0472">Membrane</keyword>
<keyword id="KW-0479">Metal-binding</keyword>
<keyword id="KW-0520">NAD</keyword>
<keyword id="KW-0521">NADP</keyword>
<keyword id="KW-0934">Plastid</keyword>
<keyword id="KW-0618">Plastoquinone</keyword>
<keyword id="KW-0874">Quinone</keyword>
<keyword id="KW-0677">Repeat</keyword>
<keyword id="KW-0793">Thylakoid</keyword>
<keyword id="KW-1278">Translocase</keyword>
<accession>Q8HVS4</accession>
<dbReference type="EC" id="7.1.1.-" evidence="1"/>
<dbReference type="EMBL" id="AF383789">
    <property type="protein sequence ID" value="AAN61730.1"/>
    <property type="molecule type" value="Genomic_DNA"/>
</dbReference>
<dbReference type="SMR" id="Q8HVS4"/>
<dbReference type="GO" id="GO:0009535">
    <property type="term" value="C:chloroplast thylakoid membrane"/>
    <property type="evidence" value="ECO:0007669"/>
    <property type="project" value="UniProtKB-SubCell"/>
</dbReference>
<dbReference type="GO" id="GO:0051539">
    <property type="term" value="F:4 iron, 4 sulfur cluster binding"/>
    <property type="evidence" value="ECO:0007669"/>
    <property type="project" value="UniProtKB-KW"/>
</dbReference>
<dbReference type="GO" id="GO:0005506">
    <property type="term" value="F:iron ion binding"/>
    <property type="evidence" value="ECO:0007669"/>
    <property type="project" value="UniProtKB-UniRule"/>
</dbReference>
<dbReference type="GO" id="GO:0008137">
    <property type="term" value="F:NADH dehydrogenase (ubiquinone) activity"/>
    <property type="evidence" value="ECO:0007669"/>
    <property type="project" value="InterPro"/>
</dbReference>
<dbReference type="GO" id="GO:0048038">
    <property type="term" value="F:quinone binding"/>
    <property type="evidence" value="ECO:0007669"/>
    <property type="project" value="UniProtKB-KW"/>
</dbReference>
<dbReference type="GO" id="GO:0019684">
    <property type="term" value="P:photosynthesis, light reaction"/>
    <property type="evidence" value="ECO:0007669"/>
    <property type="project" value="UniProtKB-UniRule"/>
</dbReference>
<dbReference type="FunFam" id="3.30.70.3270:FF:000006">
    <property type="entry name" value="NAD(P)H-quinone oxidoreductase subunit I, chloroplastic"/>
    <property type="match status" value="1"/>
</dbReference>
<dbReference type="Gene3D" id="3.30.70.3270">
    <property type="match status" value="1"/>
</dbReference>
<dbReference type="HAMAP" id="MF_01351">
    <property type="entry name" value="NDH1_NuoI"/>
    <property type="match status" value="1"/>
</dbReference>
<dbReference type="InterPro" id="IPR017896">
    <property type="entry name" value="4Fe4S_Fe-S-bd"/>
</dbReference>
<dbReference type="InterPro" id="IPR017900">
    <property type="entry name" value="4Fe4S_Fe_S_CS"/>
</dbReference>
<dbReference type="InterPro" id="IPR010226">
    <property type="entry name" value="NADH_quinone_OxRdtase_chainI"/>
</dbReference>
<dbReference type="InterPro" id="IPR004497">
    <property type="entry name" value="NDHI"/>
</dbReference>
<dbReference type="NCBIfam" id="TIGR00403">
    <property type="entry name" value="ndhI"/>
    <property type="match status" value="1"/>
</dbReference>
<dbReference type="NCBIfam" id="TIGR01971">
    <property type="entry name" value="NuoI"/>
    <property type="match status" value="1"/>
</dbReference>
<dbReference type="NCBIfam" id="NF004537">
    <property type="entry name" value="PRK05888.1-3"/>
    <property type="match status" value="1"/>
</dbReference>
<dbReference type="PANTHER" id="PTHR47275">
    <property type="entry name" value="NAD(P)H-QUINONE OXIDOREDUCTASE SUBUNIT I, CHLOROPLASTIC"/>
    <property type="match status" value="1"/>
</dbReference>
<dbReference type="PANTHER" id="PTHR47275:SF1">
    <property type="entry name" value="NAD(P)H-QUINONE OXIDOREDUCTASE SUBUNIT I, CHLOROPLASTIC"/>
    <property type="match status" value="1"/>
</dbReference>
<dbReference type="Pfam" id="PF00037">
    <property type="entry name" value="Fer4"/>
    <property type="match status" value="2"/>
</dbReference>
<dbReference type="SUPFAM" id="SSF54862">
    <property type="entry name" value="4Fe-4S ferredoxins"/>
    <property type="match status" value="1"/>
</dbReference>
<dbReference type="PROSITE" id="PS00198">
    <property type="entry name" value="4FE4S_FER_1"/>
    <property type="match status" value="2"/>
</dbReference>
<dbReference type="PROSITE" id="PS51379">
    <property type="entry name" value="4FE4S_FER_2"/>
    <property type="match status" value="2"/>
</dbReference>
<gene>
    <name evidence="1" type="primary">ndhI</name>
</gene>
<reference key="1">
    <citation type="submission" date="2003-01" db="EMBL/GenBank/DDBJ databases">
        <title>Chloroplast DNA phylogeny of tribe Heliantheae (Asteraceae).</title>
        <authorList>
            <person name="Panero J.L."/>
            <person name="Baldwin B.G."/>
            <person name="Schilling E.E."/>
            <person name="Clevinger J.A."/>
        </authorList>
    </citation>
    <scope>NUCLEOTIDE SEQUENCE [GENOMIC DNA]</scope>
</reference>